<reference key="1">
    <citation type="journal article" date="2007" name="Plant Cell">
        <title>Dothideomycete-plant interactions illuminated by genome sequencing and EST analysis of the wheat pathogen Stagonospora nodorum.</title>
        <authorList>
            <person name="Hane J.K."/>
            <person name="Lowe R.G.T."/>
            <person name="Solomon P.S."/>
            <person name="Tan K.-C."/>
            <person name="Schoch C.L."/>
            <person name="Spatafora J.W."/>
            <person name="Crous P.W."/>
            <person name="Kodira C.D."/>
            <person name="Birren B.W."/>
            <person name="Galagan J.E."/>
            <person name="Torriani S.F.F."/>
            <person name="McDonald B.A."/>
            <person name="Oliver R.P."/>
        </authorList>
    </citation>
    <scope>NUCLEOTIDE SEQUENCE [LARGE SCALE GENOMIC DNA]</scope>
    <source>
        <strain>SN15 / ATCC MYA-4574 / FGSC 10173</strain>
    </source>
</reference>
<protein>
    <recommendedName>
        <fullName evidence="1">Protein SEY1</fullName>
        <ecNumber evidence="1">3.6.5.-</ecNumber>
    </recommendedName>
</protein>
<gene>
    <name evidence="1" type="primary">SEY1</name>
    <name type="ORF">SNOG_01612</name>
</gene>
<name>SEY1_PHANO</name>
<dbReference type="EC" id="3.6.5.-" evidence="1"/>
<dbReference type="EMBL" id="CH445326">
    <property type="protein sequence ID" value="EAT91261.1"/>
    <property type="status" value="ALT_INIT"/>
    <property type="molecule type" value="Genomic_DNA"/>
</dbReference>
<dbReference type="RefSeq" id="XP_001792248.1">
    <property type="nucleotide sequence ID" value="XM_001792196.1"/>
</dbReference>
<dbReference type="SMR" id="Q0V302"/>
<dbReference type="FunCoup" id="Q0V302">
    <property type="interactions" value="65"/>
</dbReference>
<dbReference type="STRING" id="321614.Q0V302"/>
<dbReference type="GeneID" id="5969093"/>
<dbReference type="KEGG" id="pno:SNOG_01612"/>
<dbReference type="VEuPathDB" id="FungiDB:JI435_016120"/>
<dbReference type="eggNOG" id="KOG2203">
    <property type="taxonomic scope" value="Eukaryota"/>
</dbReference>
<dbReference type="InParanoid" id="Q0V302"/>
<dbReference type="OrthoDB" id="1597724at2759"/>
<dbReference type="Proteomes" id="UP000001055">
    <property type="component" value="Unassembled WGS sequence"/>
</dbReference>
<dbReference type="GO" id="GO:0005783">
    <property type="term" value="C:endoplasmic reticulum"/>
    <property type="evidence" value="ECO:0000318"/>
    <property type="project" value="GO_Central"/>
</dbReference>
<dbReference type="GO" id="GO:0005789">
    <property type="term" value="C:endoplasmic reticulum membrane"/>
    <property type="evidence" value="ECO:0007669"/>
    <property type="project" value="UniProtKB-SubCell"/>
</dbReference>
<dbReference type="GO" id="GO:0005525">
    <property type="term" value="F:GTP binding"/>
    <property type="evidence" value="ECO:0007669"/>
    <property type="project" value="UniProtKB-UniRule"/>
</dbReference>
<dbReference type="GO" id="GO:0003924">
    <property type="term" value="F:GTPase activity"/>
    <property type="evidence" value="ECO:0000318"/>
    <property type="project" value="GO_Central"/>
</dbReference>
<dbReference type="GO" id="GO:0016320">
    <property type="term" value="P:endoplasmic reticulum membrane fusion"/>
    <property type="evidence" value="ECO:0000318"/>
    <property type="project" value="GO_Central"/>
</dbReference>
<dbReference type="CDD" id="cd01851">
    <property type="entry name" value="GBP"/>
    <property type="match status" value="1"/>
</dbReference>
<dbReference type="FunFam" id="3.40.50.300:FF:000727">
    <property type="entry name" value="Protein SEY1 homolog"/>
    <property type="match status" value="1"/>
</dbReference>
<dbReference type="Gene3D" id="3.40.50.300">
    <property type="entry name" value="P-loop containing nucleotide triphosphate hydrolases"/>
    <property type="match status" value="1"/>
</dbReference>
<dbReference type="HAMAP" id="MF_03109">
    <property type="entry name" value="Sey1"/>
    <property type="match status" value="1"/>
</dbReference>
<dbReference type="InterPro" id="IPR030386">
    <property type="entry name" value="G_GB1_RHD3_dom"/>
</dbReference>
<dbReference type="InterPro" id="IPR027417">
    <property type="entry name" value="P-loop_NTPase"/>
</dbReference>
<dbReference type="InterPro" id="IPR008803">
    <property type="entry name" value="RHD3/Sey1"/>
</dbReference>
<dbReference type="InterPro" id="IPR046758">
    <property type="entry name" value="Sey1/RHD3-like_3HB"/>
</dbReference>
<dbReference type="PANTHER" id="PTHR45923">
    <property type="entry name" value="PROTEIN SEY1"/>
    <property type="match status" value="1"/>
</dbReference>
<dbReference type="PANTHER" id="PTHR45923:SF2">
    <property type="entry name" value="PROTEIN SEY1"/>
    <property type="match status" value="1"/>
</dbReference>
<dbReference type="Pfam" id="PF05879">
    <property type="entry name" value="RHD3_GTPase"/>
    <property type="match status" value="1"/>
</dbReference>
<dbReference type="Pfam" id="PF20428">
    <property type="entry name" value="Sey1_3HB"/>
    <property type="match status" value="1"/>
</dbReference>
<dbReference type="SUPFAM" id="SSF52540">
    <property type="entry name" value="P-loop containing nucleoside triphosphate hydrolases"/>
    <property type="match status" value="1"/>
</dbReference>
<dbReference type="PROSITE" id="PS51715">
    <property type="entry name" value="G_GB1_RHD3"/>
    <property type="match status" value="1"/>
</dbReference>
<proteinExistence type="inferred from homology"/>
<accession>Q0V302</accession>
<sequence length="859" mass="96449">MMMNSHFAGVGDNVDKEAYGHGIQVVDEDKVFNNNLSTYLNIEKVIPAGFNYHLISVFGSQSTGKSTLLNYLFGTQFGVMAEQERRQTTKGIWMSKNKRPEGGSAMAENILVMDVEGTDGRERGEDQDFERKSALFALATSEVLIVNIWEHQVGLYQGANMGLLKTVFEVNLQLFIKDSKTIPKSLLFFVIRDHLGTTPLKNLQNTLTQDLSKLWSTISKPKGLENSRIEEYFDFAFVALPHKILQPEKFEEAVTKLSLRFKEGYNDPKTSGLVDEAELPIFQPQYHRRIPADGFPAYAEGIWDQIVHNKDLDLPTQQELLAQFRCDEISREVLVLFDETIAPLEEKQAEDTRMGKPSVIAELGAAMNAARSTVFKDFETNASRYHKGVYKRKQAELEGKVDTRLKALSQKQLNAAHKSGVESFSDAVSAAVKAGQKKGASYDFAQIVDSEKKKAIAQFGEQAKSIVIEGASWSSFEHELKVYRKDLDDVSGRLRKDEMRRLATRIERWVRSRLDESVGLEFNKLGTGRGGSGAPEHGERPPSEKDLWDRVWAIFTETVSSAEKRFTDRAQSFDASPEEVDVGLWRLRRKSWGVLRAKIDEEVMEGNILLKLRENFEDKFRYDEQGVPRIWRPTDDIEGIYTKARESTITVIPLLARFKLSKTSAPPPLDAWIGDAPASVTPADEEDLTPIGGLDEEEGKSLEEEMTVLSDAKQADLLIRFKKTADGVYVEAKRSAIGGITQVPLYFYGLLVALGWNEIVAVLRNPVYFIFLILCAVGAYVTYTLNLWGPMIRMGNAASAQALEVGKERLREFLESSESGRQAMAMSGNQPRGESVRMNRLNGNGKKDEDAEVEDLDDI</sequence>
<comment type="function">
    <text evidence="1">Cooperates with the reticulon proteins and tubule-shaping DP1 family proteins to generate and maintain the structure of the tubular endoplasmic reticulum network. Has GTPase activity, which is required for its function in ER organization.</text>
</comment>
<comment type="subcellular location">
    <subcellularLocation>
        <location evidence="1">Endoplasmic reticulum membrane</location>
        <topology evidence="1">Multi-pass membrane protein</topology>
    </subcellularLocation>
    <text evidence="1">Enriched in the cortical ER. Concentrated in punctae along the ER tubules.</text>
</comment>
<comment type="similarity">
    <text evidence="2">Belongs to the TRAFAC class dynamin-like GTPase superfamily. GB1/RHD3 GTPase family. RHD3 subfamily.</text>
</comment>
<comment type="sequence caution" evidence="4">
    <conflict type="erroneous initiation">
        <sequence resource="EMBL-CDS" id="EAT91261"/>
    </conflict>
</comment>
<organism>
    <name type="scientific">Phaeosphaeria nodorum (strain SN15 / ATCC MYA-4574 / FGSC 10173)</name>
    <name type="common">Glume blotch fungus</name>
    <name type="synonym">Parastagonospora nodorum</name>
    <dbReference type="NCBI Taxonomy" id="321614"/>
    <lineage>
        <taxon>Eukaryota</taxon>
        <taxon>Fungi</taxon>
        <taxon>Dikarya</taxon>
        <taxon>Ascomycota</taxon>
        <taxon>Pezizomycotina</taxon>
        <taxon>Dothideomycetes</taxon>
        <taxon>Pleosporomycetidae</taxon>
        <taxon>Pleosporales</taxon>
        <taxon>Pleosporineae</taxon>
        <taxon>Phaeosphaeriaceae</taxon>
        <taxon>Parastagonospora</taxon>
    </lineage>
</organism>
<evidence type="ECO:0000255" key="1">
    <source>
        <dbReference type="HAMAP-Rule" id="MF_03109"/>
    </source>
</evidence>
<evidence type="ECO:0000255" key="2">
    <source>
        <dbReference type="PROSITE-ProRule" id="PRU01052"/>
    </source>
</evidence>
<evidence type="ECO:0000256" key="3">
    <source>
        <dbReference type="SAM" id="MobiDB-lite"/>
    </source>
</evidence>
<evidence type="ECO:0000305" key="4"/>
<feature type="chain" id="PRO_0000384994" description="Protein SEY1">
    <location>
        <begin position="1"/>
        <end position="859"/>
    </location>
</feature>
<feature type="topological domain" description="Cytoplasmic" evidence="1">
    <location>
        <begin position="1"/>
        <end position="742"/>
    </location>
</feature>
<feature type="transmembrane region" description="Helical" evidence="1">
    <location>
        <begin position="743"/>
        <end position="763"/>
    </location>
</feature>
<feature type="topological domain" description="Lumenal" evidence="1">
    <location>
        <begin position="764"/>
        <end position="766"/>
    </location>
</feature>
<feature type="transmembrane region" description="Helical" evidence="1">
    <location>
        <begin position="767"/>
        <end position="787"/>
    </location>
</feature>
<feature type="topological domain" description="Cytoplasmic" evidence="1">
    <location>
        <begin position="788"/>
        <end position="859"/>
    </location>
</feature>
<feature type="domain" description="GB1/RHD3-type G" evidence="2">
    <location>
        <begin position="49"/>
        <end position="291"/>
    </location>
</feature>
<feature type="region of interest" description="Disordered" evidence="3">
    <location>
        <begin position="525"/>
        <end position="544"/>
    </location>
</feature>
<feature type="region of interest" description="Disordered" evidence="3">
    <location>
        <begin position="816"/>
        <end position="859"/>
    </location>
</feature>
<feature type="coiled-coil region" evidence="1">
    <location>
        <begin position="476"/>
        <end position="496"/>
    </location>
</feature>
<feature type="compositionally biased region" description="Acidic residues" evidence="3">
    <location>
        <begin position="850"/>
        <end position="859"/>
    </location>
</feature>
<feature type="binding site" evidence="1">
    <location>
        <begin position="59"/>
        <end position="66"/>
    </location>
    <ligand>
        <name>GTP</name>
        <dbReference type="ChEBI" id="CHEBI:37565"/>
    </ligand>
</feature>
<keyword id="KW-0175">Coiled coil</keyword>
<keyword id="KW-0256">Endoplasmic reticulum</keyword>
<keyword id="KW-0342">GTP-binding</keyword>
<keyword id="KW-0378">Hydrolase</keyword>
<keyword id="KW-0472">Membrane</keyword>
<keyword id="KW-0547">Nucleotide-binding</keyword>
<keyword id="KW-0812">Transmembrane</keyword>
<keyword id="KW-1133">Transmembrane helix</keyword>